<gene>
    <name type="ordered locus">TC_0275</name>
</gene>
<accession>Q9PL33</accession>
<name>Y275_CHLMU</name>
<proteinExistence type="inferred from homology"/>
<protein>
    <recommendedName>
        <fullName>Uncharacterized protein TC_0275</fullName>
    </recommendedName>
</protein>
<organism>
    <name type="scientific">Chlamydia muridarum (strain MoPn / Nigg)</name>
    <dbReference type="NCBI Taxonomy" id="243161"/>
    <lineage>
        <taxon>Bacteria</taxon>
        <taxon>Pseudomonadati</taxon>
        <taxon>Chlamydiota</taxon>
        <taxon>Chlamydiia</taxon>
        <taxon>Chlamydiales</taxon>
        <taxon>Chlamydiaceae</taxon>
        <taxon>Chlamydia/Chlamydophila group</taxon>
        <taxon>Chlamydia</taxon>
    </lineage>
</organism>
<reference key="1">
    <citation type="journal article" date="2000" name="Nucleic Acids Res.">
        <title>Genome sequences of Chlamydia trachomatis MoPn and Chlamydia pneumoniae AR39.</title>
        <authorList>
            <person name="Read T.D."/>
            <person name="Brunham R.C."/>
            <person name="Shen C."/>
            <person name="Gill S.R."/>
            <person name="Heidelberg J.F."/>
            <person name="White O."/>
            <person name="Hickey E.K."/>
            <person name="Peterson J.D."/>
            <person name="Utterback T.R."/>
            <person name="Berry K.J."/>
            <person name="Bass S."/>
            <person name="Linher K.D."/>
            <person name="Weidman J.F."/>
            <person name="Khouri H.M."/>
            <person name="Craven B."/>
            <person name="Bowman C."/>
            <person name="Dodson R.J."/>
            <person name="Gwinn M.L."/>
            <person name="Nelson W.C."/>
            <person name="DeBoy R.T."/>
            <person name="Kolonay J.F."/>
            <person name="McClarty G."/>
            <person name="Salzberg S.L."/>
            <person name="Eisen J.A."/>
            <person name="Fraser C.M."/>
        </authorList>
    </citation>
    <scope>NUCLEOTIDE SEQUENCE [LARGE SCALE GENOMIC DNA]</scope>
    <source>
        <strain>MoPn / Nigg</strain>
    </source>
</reference>
<feature type="chain" id="PRO_0000218379" description="Uncharacterized protein TC_0275">
    <location>
        <begin position="1"/>
        <end position="316"/>
    </location>
</feature>
<sequence>MLKILFHTMTLFGHLLSTPVYMVGDACGKDRDEYRNPPLKAFSIESQFLQIENADFKTLPNQSLGYRQTDTMFFATLPVTDMSGFLVSARYLGAEVLWKSSKDLQNTDPHALGYFAFQDKSFYQYVSLSAGAYTLALTNWQWSVLFSGMVDPENIEMGSGVYQVVLSSKYHASEAFAVVIGVINEVGLHDKQAWPLLGFSYKPEDKLTLNCIYPVNFSAEYQCTSVCDLGAAYRLTRFRKKFPKNSLTTSEGIFEYSGREIEGSVKLIFWPGQSLKVFGGYSVGNDISLTNPHNEDEKIYKFGSSLFFGGSANLHF</sequence>
<comment type="similarity">
    <text evidence="1">Belongs to the chlamydial CPn_0441/CT_007/TC_0275 family.</text>
</comment>
<evidence type="ECO:0000305" key="1"/>
<dbReference type="EMBL" id="AE002160">
    <property type="protein sequence ID" value="AAF39143.1"/>
    <property type="molecule type" value="Genomic_DNA"/>
</dbReference>
<dbReference type="PIR" id="C81720">
    <property type="entry name" value="C81720"/>
</dbReference>
<dbReference type="RefSeq" id="WP_010230005.1">
    <property type="nucleotide sequence ID" value="NZ_CP063055.1"/>
</dbReference>
<dbReference type="GeneID" id="1246445"/>
<dbReference type="KEGG" id="cmu:TC_0275"/>
<dbReference type="HOGENOM" id="CLU_902237_0_0_0"/>
<dbReference type="OrthoDB" id="18429at2"/>
<dbReference type="Proteomes" id="UP000000800">
    <property type="component" value="Chromosome"/>
</dbReference>